<comment type="function">
    <text evidence="4">Insecticidal neurotoxin that modulates the insect Nav channel (DmNaV1/tipE (para/tipE)) in a unique manner, with both the activation and inactivation processes being affected. The voltage dependence of activation is shifted toward more hyperpolarized potentials (analogous to site 4 toxins) and a non-inactivating persistent sodium current is induced (site 3-like action). Interestingly, both effects take place in a voltage-dependent manner, producing a bell-shaped curve between -80 and 0 mV. Compared to beta/delta-agatoxin-1 to -3, this toxin appears to affect the insect sodium channel only weakly.</text>
</comment>
<comment type="subcellular location">
    <subcellularLocation>
        <location evidence="4">Secreted</location>
    </subcellularLocation>
</comment>
<comment type="tissue specificity">
    <text evidence="4">Expressed by the venom gland.</text>
</comment>
<comment type="domain">
    <text evidence="1">The presence of a 'disulfide through disulfide knot' structurally defines this protein as a knottin.</text>
</comment>
<comment type="mass spectrometry"/>
<comment type="miscellaneous">
    <text evidence="1">Negative results: does not affect mammalian sodium channels (Nav).</text>
</comment>
<comment type="similarity">
    <text evidence="5">Belongs to the neurotoxin 07 (Beta/delta-agtx) family. 01 (aga-2) subfamily.</text>
</comment>
<name>T2G3A_AGEOR</name>
<sequence>MKAVIFFCLLSVMVFTVIEAVKEEGTKPAEAARECAAKNKRCADWAGPWCCEGLYCSCRSYPGCMCRPNSG</sequence>
<evidence type="ECO:0000250" key="1"/>
<evidence type="ECO:0000250" key="2">
    <source>
        <dbReference type="UniProtKB" id="P83257"/>
    </source>
</evidence>
<evidence type="ECO:0000255" key="3"/>
<evidence type="ECO:0000269" key="4">
    <source>
    </source>
</evidence>
<evidence type="ECO:0000305" key="5"/>
<evidence type="ECO:0000312" key="6">
    <source>
        <dbReference type="EMBL" id="AAU87886.1"/>
    </source>
</evidence>
<organism>
    <name type="scientific">Agelena orientalis</name>
    <name type="common">Funnel-web spider</name>
    <dbReference type="NCBI Taxonomy" id="293813"/>
    <lineage>
        <taxon>Eukaryota</taxon>
        <taxon>Metazoa</taxon>
        <taxon>Ecdysozoa</taxon>
        <taxon>Arthropoda</taxon>
        <taxon>Chelicerata</taxon>
        <taxon>Arachnida</taxon>
        <taxon>Araneae</taxon>
        <taxon>Araneomorphae</taxon>
        <taxon>Entelegynae</taxon>
        <taxon>Agelenidae</taxon>
        <taxon>Agelena</taxon>
    </lineage>
</organism>
<reference key="1">
    <citation type="journal article" date="2005" name="Proteins">
        <title>A novel strategy for the identification of toxinlike structures in spider venom.</title>
        <authorList>
            <person name="Kozlov S.A."/>
            <person name="Malyavka A."/>
            <person name="McCutchen B."/>
            <person name="Lu A."/>
            <person name="Schepers E."/>
            <person name="Herrmann R."/>
            <person name="Grishin E.V."/>
        </authorList>
    </citation>
    <scope>NUCLEOTIDE SEQUENCE [MRNA]</scope>
    <source>
        <tissue>Venom gland</tissue>
    </source>
</reference>
<reference key="2">
    <citation type="journal article" date="2010" name="J. Biol. Chem.">
        <title>Unique bell-shaped voltage-dependent modulation of Na+ channel gating by novel insect-selective toxins from the spider Agelena orientalis.</title>
        <authorList>
            <person name="Billen B."/>
            <person name="Vassilevski A."/>
            <person name="Nikolsky A."/>
            <person name="Debaveye S."/>
            <person name="Tytgat J."/>
            <person name="Grishin E."/>
        </authorList>
    </citation>
    <scope>PROTEIN SEQUENCE OF 34-70</scope>
    <scope>FUNCTION</scope>
    <scope>SUBCELLULAR LOCATION</scope>
    <scope>TISSUE SPECIFICITY</scope>
    <scope>MASS SPECTROMETRY</scope>
    <scope>AMIDATION AT SER-70</scope>
    <source>
        <tissue>Venom</tissue>
    </source>
</reference>
<keyword id="KW-0027">Amidation</keyword>
<keyword id="KW-0903">Direct protein sequencing</keyword>
<keyword id="KW-1015">Disulfide bond</keyword>
<keyword id="KW-0872">Ion channel impairing toxin</keyword>
<keyword id="KW-0960">Knottin</keyword>
<keyword id="KW-0528">Neurotoxin</keyword>
<keyword id="KW-0964">Secreted</keyword>
<keyword id="KW-0732">Signal</keyword>
<keyword id="KW-0800">Toxin</keyword>
<keyword id="KW-0738">Voltage-gated sodium channel impairing toxin</keyword>
<feature type="signal peptide" evidence="3">
    <location>
        <begin position="1"/>
        <end position="20"/>
    </location>
</feature>
<feature type="propeptide" id="PRO_5000093655" evidence="4">
    <location>
        <begin position="21"/>
        <end position="33"/>
    </location>
</feature>
<feature type="chain" id="PRO_5000093656" description="U3-agatoxin-Ao1a" evidence="4">
    <location>
        <begin position="34"/>
        <end position="70"/>
    </location>
</feature>
<feature type="modified residue" description="Serine amide" evidence="4">
    <location>
        <position position="70"/>
    </location>
</feature>
<feature type="disulfide bond" evidence="2">
    <location>
        <begin position="35"/>
        <end position="51"/>
    </location>
</feature>
<feature type="disulfide bond" evidence="2">
    <location>
        <begin position="42"/>
        <end position="56"/>
    </location>
</feature>
<feature type="disulfide bond" evidence="2">
    <location>
        <begin position="50"/>
        <end position="66"/>
    </location>
</feature>
<feature type="disulfide bond" evidence="2">
    <location>
        <begin position="58"/>
        <end position="64"/>
    </location>
</feature>
<proteinExistence type="evidence at protein level"/>
<protein>
    <recommendedName>
        <fullName evidence="5">U3-agatoxin-Ao1a</fullName>
        <shortName evidence="5">U3-AGTX-Ao1a</shortName>
    </recommendedName>
    <alternativeName>
        <fullName>Beta/delta-agatoxin-7</fullName>
    </alternativeName>
    <alternativeName>
        <fullName evidence="6">Mu-2Aga_01</fullName>
    </alternativeName>
</protein>
<dbReference type="EMBL" id="AY681326">
    <property type="protein sequence ID" value="AAU87886.1"/>
    <property type="molecule type" value="mRNA"/>
</dbReference>
<dbReference type="SMR" id="Q5Y4V8"/>
<dbReference type="ArachnoServer" id="AS000086">
    <property type="toxin name" value="U3-agatoxin-Ao1a"/>
</dbReference>
<dbReference type="GO" id="GO:0005576">
    <property type="term" value="C:extracellular region"/>
    <property type="evidence" value="ECO:0007669"/>
    <property type="project" value="UniProtKB-SubCell"/>
</dbReference>
<dbReference type="GO" id="GO:0017080">
    <property type="term" value="F:sodium channel regulator activity"/>
    <property type="evidence" value="ECO:0007669"/>
    <property type="project" value="UniProtKB-KW"/>
</dbReference>
<dbReference type="GO" id="GO:0090729">
    <property type="term" value="F:toxin activity"/>
    <property type="evidence" value="ECO:0007669"/>
    <property type="project" value="UniProtKB-KW"/>
</dbReference>
<dbReference type="InterPro" id="IPR016328">
    <property type="entry name" value="Beta/delta-agatoxin_fam"/>
</dbReference>
<dbReference type="Pfam" id="PF05980">
    <property type="entry name" value="Toxin_7"/>
    <property type="match status" value="1"/>
</dbReference>
<dbReference type="SUPFAM" id="SSF57059">
    <property type="entry name" value="omega toxin-like"/>
    <property type="match status" value="1"/>
</dbReference>
<dbReference type="PROSITE" id="PS60015">
    <property type="entry name" value="MU_AGATOXIN"/>
    <property type="match status" value="1"/>
</dbReference>
<accession>Q5Y4V8</accession>